<dbReference type="EMBL" id="CR382131">
    <property type="protein sequence ID" value="CAG79961.1"/>
    <property type="molecule type" value="Genomic_DNA"/>
</dbReference>
<dbReference type="RefSeq" id="XP_504362.1">
    <property type="nucleotide sequence ID" value="XM_504362.1"/>
</dbReference>
<dbReference type="EnsemblFungi" id="CAG79961">
    <property type="protein sequence ID" value="CAG79961"/>
    <property type="gene ID" value="YALI0_E24651g"/>
</dbReference>
<dbReference type="KEGG" id="yli:2912656"/>
<dbReference type="VEuPathDB" id="FungiDB:YALI0_E24651g"/>
<dbReference type="HOGENOM" id="CLU_007078_1_0_1"/>
<dbReference type="InParanoid" id="Q6C4Q0"/>
<dbReference type="OrthoDB" id="122203at4891"/>
<dbReference type="Proteomes" id="UP000001300">
    <property type="component" value="Chromosome E"/>
</dbReference>
<dbReference type="GO" id="GO:0016020">
    <property type="term" value="C:membrane"/>
    <property type="evidence" value="ECO:0007669"/>
    <property type="project" value="UniProtKB-SubCell"/>
</dbReference>
<dbReference type="GO" id="GO:0022857">
    <property type="term" value="F:transmembrane transporter activity"/>
    <property type="evidence" value="ECO:0007669"/>
    <property type="project" value="InterPro"/>
</dbReference>
<dbReference type="InterPro" id="IPR010619">
    <property type="entry name" value="ThrE-like_N"/>
</dbReference>
<dbReference type="InterPro" id="IPR051361">
    <property type="entry name" value="ThrE/Ser_Exporter"/>
</dbReference>
<dbReference type="PANTHER" id="PTHR31082">
    <property type="entry name" value="PHEROMONE-REGULATED MEMBRANE PROTEIN 10"/>
    <property type="match status" value="1"/>
</dbReference>
<dbReference type="PANTHER" id="PTHR31082:SF4">
    <property type="entry name" value="PHEROMONE-REGULATED MEMBRANE PROTEIN 10"/>
    <property type="match status" value="1"/>
</dbReference>
<dbReference type="Pfam" id="PF06738">
    <property type="entry name" value="ThrE"/>
    <property type="match status" value="1"/>
</dbReference>
<protein>
    <recommendedName>
        <fullName>Pheromone-regulated membrane protein 10</fullName>
    </recommendedName>
</protein>
<comment type="subcellular location">
    <subcellularLocation>
        <location>Membrane</location>
        <topology>Multi-pass membrane protein</topology>
    </subcellularLocation>
</comment>
<comment type="similarity">
    <text evidence="3">Belongs to the ThrE exporter (TC 2.A.79) family.</text>
</comment>
<reference key="1">
    <citation type="journal article" date="2004" name="Nature">
        <title>Genome evolution in yeasts.</title>
        <authorList>
            <person name="Dujon B."/>
            <person name="Sherman D."/>
            <person name="Fischer G."/>
            <person name="Durrens P."/>
            <person name="Casaregola S."/>
            <person name="Lafontaine I."/>
            <person name="de Montigny J."/>
            <person name="Marck C."/>
            <person name="Neuveglise C."/>
            <person name="Talla E."/>
            <person name="Goffard N."/>
            <person name="Frangeul L."/>
            <person name="Aigle M."/>
            <person name="Anthouard V."/>
            <person name="Babour A."/>
            <person name="Barbe V."/>
            <person name="Barnay S."/>
            <person name="Blanchin S."/>
            <person name="Beckerich J.-M."/>
            <person name="Beyne E."/>
            <person name="Bleykasten C."/>
            <person name="Boisrame A."/>
            <person name="Boyer J."/>
            <person name="Cattolico L."/>
            <person name="Confanioleri F."/>
            <person name="de Daruvar A."/>
            <person name="Despons L."/>
            <person name="Fabre E."/>
            <person name="Fairhead C."/>
            <person name="Ferry-Dumazet H."/>
            <person name="Groppi A."/>
            <person name="Hantraye F."/>
            <person name="Hennequin C."/>
            <person name="Jauniaux N."/>
            <person name="Joyet P."/>
            <person name="Kachouri R."/>
            <person name="Kerrest A."/>
            <person name="Koszul R."/>
            <person name="Lemaire M."/>
            <person name="Lesur I."/>
            <person name="Ma L."/>
            <person name="Muller H."/>
            <person name="Nicaud J.-M."/>
            <person name="Nikolski M."/>
            <person name="Oztas S."/>
            <person name="Ozier-Kalogeropoulos O."/>
            <person name="Pellenz S."/>
            <person name="Potier S."/>
            <person name="Richard G.-F."/>
            <person name="Straub M.-L."/>
            <person name="Suleau A."/>
            <person name="Swennen D."/>
            <person name="Tekaia F."/>
            <person name="Wesolowski-Louvel M."/>
            <person name="Westhof E."/>
            <person name="Wirth B."/>
            <person name="Zeniou-Meyer M."/>
            <person name="Zivanovic Y."/>
            <person name="Bolotin-Fukuhara M."/>
            <person name="Thierry A."/>
            <person name="Bouchier C."/>
            <person name="Caudron B."/>
            <person name="Scarpelli C."/>
            <person name="Gaillardin C."/>
            <person name="Weissenbach J."/>
            <person name="Wincker P."/>
            <person name="Souciet J.-L."/>
        </authorList>
    </citation>
    <scope>NUCLEOTIDE SEQUENCE [LARGE SCALE GENOMIC DNA]</scope>
    <source>
        <strain>CLIB 122 / E 150</strain>
    </source>
</reference>
<gene>
    <name type="ordered locus">YALI0E24651g</name>
</gene>
<feature type="chain" id="PRO_0000409256" description="Pheromone-regulated membrane protein 10">
    <location>
        <begin position="1"/>
        <end position="1219"/>
    </location>
</feature>
<feature type="transmembrane region" description="Helical" evidence="1">
    <location>
        <begin position="864"/>
        <end position="884"/>
    </location>
</feature>
<feature type="transmembrane region" description="Helical" evidence="1">
    <location>
        <begin position="888"/>
        <end position="908"/>
    </location>
</feature>
<feature type="transmembrane region" description="Helical" evidence="1">
    <location>
        <begin position="918"/>
        <end position="938"/>
    </location>
</feature>
<feature type="transmembrane region" description="Helical" evidence="1">
    <location>
        <begin position="945"/>
        <end position="965"/>
    </location>
</feature>
<feature type="transmembrane region" description="Helical" evidence="1">
    <location>
        <begin position="983"/>
        <end position="1003"/>
    </location>
</feature>
<feature type="transmembrane region" description="Helical" evidence="1">
    <location>
        <begin position="1021"/>
        <end position="1041"/>
    </location>
</feature>
<feature type="transmembrane region" description="Helical" evidence="1">
    <location>
        <begin position="1049"/>
        <end position="1069"/>
    </location>
</feature>
<feature type="transmembrane region" description="Helical" evidence="1">
    <location>
        <begin position="1075"/>
        <end position="1095"/>
    </location>
</feature>
<feature type="transmembrane region" description="Helical" evidence="1">
    <location>
        <begin position="1100"/>
        <end position="1120"/>
    </location>
</feature>
<feature type="transmembrane region" description="Helical" evidence="1">
    <location>
        <begin position="1184"/>
        <end position="1204"/>
    </location>
</feature>
<feature type="region of interest" description="Disordered" evidence="2">
    <location>
        <begin position="1"/>
        <end position="273"/>
    </location>
</feature>
<feature type="region of interest" description="Disordered" evidence="2">
    <location>
        <begin position="303"/>
        <end position="490"/>
    </location>
</feature>
<feature type="region of interest" description="Disordered" evidence="2">
    <location>
        <begin position="503"/>
        <end position="533"/>
    </location>
</feature>
<feature type="region of interest" description="Disordered" evidence="2">
    <location>
        <begin position="555"/>
        <end position="713"/>
    </location>
</feature>
<feature type="compositionally biased region" description="Basic and acidic residues" evidence="2">
    <location>
        <begin position="1"/>
        <end position="11"/>
    </location>
</feature>
<feature type="compositionally biased region" description="Acidic residues" evidence="2">
    <location>
        <begin position="42"/>
        <end position="53"/>
    </location>
</feature>
<feature type="compositionally biased region" description="Low complexity" evidence="2">
    <location>
        <begin position="57"/>
        <end position="68"/>
    </location>
</feature>
<feature type="compositionally biased region" description="Polar residues" evidence="2">
    <location>
        <begin position="104"/>
        <end position="115"/>
    </location>
</feature>
<feature type="compositionally biased region" description="Low complexity" evidence="2">
    <location>
        <begin position="136"/>
        <end position="155"/>
    </location>
</feature>
<feature type="compositionally biased region" description="Acidic residues" evidence="2">
    <location>
        <begin position="159"/>
        <end position="171"/>
    </location>
</feature>
<feature type="compositionally biased region" description="Acidic residues" evidence="2">
    <location>
        <begin position="219"/>
        <end position="231"/>
    </location>
</feature>
<feature type="compositionally biased region" description="Basic and acidic residues" evidence="2">
    <location>
        <begin position="259"/>
        <end position="273"/>
    </location>
</feature>
<feature type="compositionally biased region" description="Basic and acidic residues" evidence="2">
    <location>
        <begin position="330"/>
        <end position="346"/>
    </location>
</feature>
<feature type="compositionally biased region" description="Basic and acidic residues" evidence="2">
    <location>
        <begin position="395"/>
        <end position="421"/>
    </location>
</feature>
<feature type="compositionally biased region" description="Basic residues" evidence="2">
    <location>
        <begin position="422"/>
        <end position="432"/>
    </location>
</feature>
<feature type="compositionally biased region" description="Polar residues" evidence="2">
    <location>
        <begin position="435"/>
        <end position="446"/>
    </location>
</feature>
<feature type="compositionally biased region" description="Basic and acidic residues" evidence="2">
    <location>
        <begin position="448"/>
        <end position="470"/>
    </location>
</feature>
<feature type="compositionally biased region" description="Low complexity" evidence="2">
    <location>
        <begin position="565"/>
        <end position="577"/>
    </location>
</feature>
<feature type="compositionally biased region" description="Basic residues" evidence="2">
    <location>
        <begin position="598"/>
        <end position="615"/>
    </location>
</feature>
<feature type="compositionally biased region" description="Basic and acidic residues" evidence="2">
    <location>
        <begin position="616"/>
        <end position="641"/>
    </location>
</feature>
<feature type="compositionally biased region" description="Low complexity" evidence="2">
    <location>
        <begin position="642"/>
        <end position="652"/>
    </location>
</feature>
<feature type="compositionally biased region" description="Basic residues" evidence="2">
    <location>
        <begin position="653"/>
        <end position="673"/>
    </location>
</feature>
<feature type="compositionally biased region" description="Basic and acidic residues" evidence="2">
    <location>
        <begin position="693"/>
        <end position="713"/>
    </location>
</feature>
<accession>Q6C4Q0</accession>
<name>PRM10_YARLI</name>
<evidence type="ECO:0000255" key="1"/>
<evidence type="ECO:0000256" key="2">
    <source>
        <dbReference type="SAM" id="MobiDB-lite"/>
    </source>
</evidence>
<evidence type="ECO:0000305" key="3"/>
<keyword id="KW-0472">Membrane</keyword>
<keyword id="KW-1185">Reference proteome</keyword>
<keyword id="KW-0812">Transmembrane</keyword>
<keyword id="KW-1133">Transmembrane helix</keyword>
<organism>
    <name type="scientific">Yarrowia lipolytica (strain CLIB 122 / E 150)</name>
    <name type="common">Yeast</name>
    <name type="synonym">Candida lipolytica</name>
    <dbReference type="NCBI Taxonomy" id="284591"/>
    <lineage>
        <taxon>Eukaryota</taxon>
        <taxon>Fungi</taxon>
        <taxon>Dikarya</taxon>
        <taxon>Ascomycota</taxon>
        <taxon>Saccharomycotina</taxon>
        <taxon>Dipodascomycetes</taxon>
        <taxon>Dipodascales</taxon>
        <taxon>Dipodascales incertae sedis</taxon>
        <taxon>Yarrowia</taxon>
    </lineage>
</organism>
<proteinExistence type="inferred from homology"/>
<sequence>MMRTQSDEHVATRSSSANKQRQRVRFPKDNDPTTKRILYPADENDDGHDDSDEKETSVVIPTPSVVIVGPDGEEPASAPISTGSPGADTDDYFSTHPNKKKSTLKSPGTPTTYSPSVPAGRARSATGVTTHTPPKGSSLSSTTLMNTLLNSSGLGQYDTESEEDDDEDEEVTFTARPRQPAQPSNSEEAGPSEQPQFRIDKVKSISLMRARQSRAREAQEEETVASTDDDGVGNNDMFKIDDDARSVSTDESSDDESDADRAARADAPLIERERASAAHVDAFAQNSERGSNMAVGAAIMGGLASFGSMSGGGMAPGAVDRSSESSQTLDDQRDQRDSHLALRRENALGMHSHSAPGSEDHTPGDASGNASAGNHDDGEDSLAGHDINDIPLVALDRRLEDIKEKRAEDKEKRAEDNEKERQHHHHNHHHHHSSETGPNTGASSPFSEEEKDREAEEAEILRDQARDLVNQHKHAVHTPDAEDEDYDPFTAPAVDYFSSIHIHDDDEDEDNHGNFLTYDAADGSVTPTHEDYVAPPKRFKQGVLGALLKLYNEEEGNKSTSTLATTVGDGTSTGDVSPMLYGSEPTTPGGTPIDHPTKSKTKTTQKLGLKKKKKELLKIIEDQRKEKEENKKRPKWYDKSRSTSPSPGGTPAPHHHHHIPGLHLHHHTKGHQRSHSEGYLDEMETAAGGGGDGGDKPPDRPRSLRSEALRPVKDIKKLNKMAKNTGKNFKKRERELKRRRRQEVKITVHIAELLQRQRFILRMCRALMLYGAPTHRLEEYMKMTSRILEIDGQFLYIPGCMIVSFGDATTHTSEMQLVRCVQGVNLSKLQDTHEIYKEVVHDMIGVEEASNRLDEILRSKNLYPPWLCVIFFACGTGVVSPYAFRGRWADIPMCIILGSVVGFFQIIVAPRSDLYNNVFEVSMSILISFLARAIGTISSGGSHPFCFAAIAQGSLAIILPGYIVLCGSLELQSKNIVAGSIRMFYAVIYSMFLGFGITLGAVVYGWCDHNATRQDKCPQQLDPLWRILFVPLYSFFIALVNQARITQLPSMLLISGAGYTVTYFVGANIPDPDNSSYLTSAIGAFTIGILGNLYSRLGHGLAFAAMLPGIFVQVPSGVASQGSLVAAIANSNRLIGNKNVTTTIRETIVNSATSTVVTRVQTSLLTETSTAAIEQATPGGAANLGFTMIQVAIGITVGLFAATLCVYPFGKKRSGLFTF</sequence>